<name>SYD_ECOHS</name>
<keyword id="KW-0030">Aminoacyl-tRNA synthetase</keyword>
<keyword id="KW-0067">ATP-binding</keyword>
<keyword id="KW-0963">Cytoplasm</keyword>
<keyword id="KW-0436">Ligase</keyword>
<keyword id="KW-0547">Nucleotide-binding</keyword>
<keyword id="KW-0648">Protein biosynthesis</keyword>
<organism>
    <name type="scientific">Escherichia coli O9:H4 (strain HS)</name>
    <dbReference type="NCBI Taxonomy" id="331112"/>
    <lineage>
        <taxon>Bacteria</taxon>
        <taxon>Pseudomonadati</taxon>
        <taxon>Pseudomonadota</taxon>
        <taxon>Gammaproteobacteria</taxon>
        <taxon>Enterobacterales</taxon>
        <taxon>Enterobacteriaceae</taxon>
        <taxon>Escherichia</taxon>
    </lineage>
</organism>
<accession>A8A166</accession>
<gene>
    <name evidence="1" type="primary">aspS</name>
    <name type="ordered locus">EcHS_A1959</name>
</gene>
<comment type="function">
    <text evidence="1">Catalyzes the attachment of L-aspartate to tRNA(Asp) in a two-step reaction: L-aspartate is first activated by ATP to form Asp-AMP and then transferred to the acceptor end of tRNA(Asp).</text>
</comment>
<comment type="catalytic activity">
    <reaction evidence="1">
        <text>tRNA(Asp) + L-aspartate + ATP = L-aspartyl-tRNA(Asp) + AMP + diphosphate</text>
        <dbReference type="Rhea" id="RHEA:19649"/>
        <dbReference type="Rhea" id="RHEA-COMP:9660"/>
        <dbReference type="Rhea" id="RHEA-COMP:9678"/>
        <dbReference type="ChEBI" id="CHEBI:29991"/>
        <dbReference type="ChEBI" id="CHEBI:30616"/>
        <dbReference type="ChEBI" id="CHEBI:33019"/>
        <dbReference type="ChEBI" id="CHEBI:78442"/>
        <dbReference type="ChEBI" id="CHEBI:78516"/>
        <dbReference type="ChEBI" id="CHEBI:456215"/>
        <dbReference type="EC" id="6.1.1.12"/>
    </reaction>
</comment>
<comment type="subunit">
    <text evidence="1">Homodimer.</text>
</comment>
<comment type="subcellular location">
    <subcellularLocation>
        <location evidence="1">Cytoplasm</location>
    </subcellularLocation>
</comment>
<comment type="similarity">
    <text evidence="1">Belongs to the class-II aminoacyl-tRNA synthetase family. Type 1 subfamily.</text>
</comment>
<dbReference type="EC" id="6.1.1.12" evidence="1"/>
<dbReference type="EMBL" id="CP000802">
    <property type="protein sequence ID" value="ABV06270.1"/>
    <property type="molecule type" value="Genomic_DNA"/>
</dbReference>
<dbReference type="RefSeq" id="WP_001258678.1">
    <property type="nucleotide sequence ID" value="NC_009800.1"/>
</dbReference>
<dbReference type="SMR" id="A8A166"/>
<dbReference type="KEGG" id="ecx:EcHS_A1959"/>
<dbReference type="HOGENOM" id="CLU_014330_3_2_6"/>
<dbReference type="GO" id="GO:0005737">
    <property type="term" value="C:cytoplasm"/>
    <property type="evidence" value="ECO:0007669"/>
    <property type="project" value="UniProtKB-SubCell"/>
</dbReference>
<dbReference type="GO" id="GO:0004815">
    <property type="term" value="F:aspartate-tRNA ligase activity"/>
    <property type="evidence" value="ECO:0007669"/>
    <property type="project" value="UniProtKB-UniRule"/>
</dbReference>
<dbReference type="GO" id="GO:0005524">
    <property type="term" value="F:ATP binding"/>
    <property type="evidence" value="ECO:0007669"/>
    <property type="project" value="UniProtKB-UniRule"/>
</dbReference>
<dbReference type="GO" id="GO:0003676">
    <property type="term" value="F:nucleic acid binding"/>
    <property type="evidence" value="ECO:0007669"/>
    <property type="project" value="InterPro"/>
</dbReference>
<dbReference type="GO" id="GO:0006422">
    <property type="term" value="P:aspartyl-tRNA aminoacylation"/>
    <property type="evidence" value="ECO:0007669"/>
    <property type="project" value="UniProtKB-UniRule"/>
</dbReference>
<dbReference type="CDD" id="cd00777">
    <property type="entry name" value="AspRS_core"/>
    <property type="match status" value="1"/>
</dbReference>
<dbReference type="CDD" id="cd04317">
    <property type="entry name" value="EcAspRS_like_N"/>
    <property type="match status" value="1"/>
</dbReference>
<dbReference type="FunFam" id="2.40.50.140:FF:000080">
    <property type="entry name" value="Aspartate--tRNA ligase"/>
    <property type="match status" value="1"/>
</dbReference>
<dbReference type="FunFam" id="3.30.1360.30:FF:000001">
    <property type="entry name" value="Aspartate--tRNA ligase"/>
    <property type="match status" value="1"/>
</dbReference>
<dbReference type="Gene3D" id="3.30.930.10">
    <property type="entry name" value="Bira Bifunctional Protein, Domain 2"/>
    <property type="match status" value="1"/>
</dbReference>
<dbReference type="Gene3D" id="3.30.1360.30">
    <property type="entry name" value="GAD-like domain"/>
    <property type="match status" value="1"/>
</dbReference>
<dbReference type="Gene3D" id="2.40.50.140">
    <property type="entry name" value="Nucleic acid-binding proteins"/>
    <property type="match status" value="1"/>
</dbReference>
<dbReference type="HAMAP" id="MF_00044">
    <property type="entry name" value="Asp_tRNA_synth_type1"/>
    <property type="match status" value="1"/>
</dbReference>
<dbReference type="InterPro" id="IPR004364">
    <property type="entry name" value="Aa-tRNA-synt_II"/>
</dbReference>
<dbReference type="InterPro" id="IPR006195">
    <property type="entry name" value="aa-tRNA-synth_II"/>
</dbReference>
<dbReference type="InterPro" id="IPR045864">
    <property type="entry name" value="aa-tRNA-synth_II/BPL/LPL"/>
</dbReference>
<dbReference type="InterPro" id="IPR004524">
    <property type="entry name" value="Asp-tRNA-ligase_1"/>
</dbReference>
<dbReference type="InterPro" id="IPR047089">
    <property type="entry name" value="Asp-tRNA-ligase_1_N"/>
</dbReference>
<dbReference type="InterPro" id="IPR002312">
    <property type="entry name" value="Asp/Asn-tRNA-synth_IIb"/>
</dbReference>
<dbReference type="InterPro" id="IPR047090">
    <property type="entry name" value="AspRS_core"/>
</dbReference>
<dbReference type="InterPro" id="IPR004115">
    <property type="entry name" value="GAD-like_sf"/>
</dbReference>
<dbReference type="InterPro" id="IPR029351">
    <property type="entry name" value="GAD_dom"/>
</dbReference>
<dbReference type="InterPro" id="IPR012340">
    <property type="entry name" value="NA-bd_OB-fold"/>
</dbReference>
<dbReference type="InterPro" id="IPR004365">
    <property type="entry name" value="NA-bd_OB_tRNA"/>
</dbReference>
<dbReference type="NCBIfam" id="TIGR00459">
    <property type="entry name" value="aspS_bact"/>
    <property type="match status" value="1"/>
</dbReference>
<dbReference type="NCBIfam" id="NF001750">
    <property type="entry name" value="PRK00476.1"/>
    <property type="match status" value="1"/>
</dbReference>
<dbReference type="PANTHER" id="PTHR22594:SF5">
    <property type="entry name" value="ASPARTATE--TRNA LIGASE, MITOCHONDRIAL"/>
    <property type="match status" value="1"/>
</dbReference>
<dbReference type="PANTHER" id="PTHR22594">
    <property type="entry name" value="ASPARTYL/LYSYL-TRNA SYNTHETASE"/>
    <property type="match status" value="1"/>
</dbReference>
<dbReference type="Pfam" id="PF02938">
    <property type="entry name" value="GAD"/>
    <property type="match status" value="1"/>
</dbReference>
<dbReference type="Pfam" id="PF00152">
    <property type="entry name" value="tRNA-synt_2"/>
    <property type="match status" value="1"/>
</dbReference>
<dbReference type="Pfam" id="PF01336">
    <property type="entry name" value="tRNA_anti-codon"/>
    <property type="match status" value="1"/>
</dbReference>
<dbReference type="PRINTS" id="PR01042">
    <property type="entry name" value="TRNASYNTHASP"/>
</dbReference>
<dbReference type="SUPFAM" id="SSF55681">
    <property type="entry name" value="Class II aaRS and biotin synthetases"/>
    <property type="match status" value="1"/>
</dbReference>
<dbReference type="SUPFAM" id="SSF55261">
    <property type="entry name" value="GAD domain-like"/>
    <property type="match status" value="1"/>
</dbReference>
<dbReference type="SUPFAM" id="SSF50249">
    <property type="entry name" value="Nucleic acid-binding proteins"/>
    <property type="match status" value="1"/>
</dbReference>
<dbReference type="PROSITE" id="PS50862">
    <property type="entry name" value="AA_TRNA_LIGASE_II"/>
    <property type="match status" value="1"/>
</dbReference>
<feature type="chain" id="PRO_1000057302" description="Aspartate--tRNA ligase">
    <location>
        <begin position="1"/>
        <end position="590"/>
    </location>
</feature>
<feature type="region of interest" description="Aspartate" evidence="1">
    <location>
        <begin position="195"/>
        <end position="198"/>
    </location>
</feature>
<feature type="binding site" evidence="1">
    <location>
        <position position="171"/>
    </location>
    <ligand>
        <name>L-aspartate</name>
        <dbReference type="ChEBI" id="CHEBI:29991"/>
    </ligand>
</feature>
<feature type="binding site" evidence="1">
    <location>
        <begin position="217"/>
        <end position="219"/>
    </location>
    <ligand>
        <name>ATP</name>
        <dbReference type="ChEBI" id="CHEBI:30616"/>
    </ligand>
</feature>
<feature type="binding site" evidence="1">
    <location>
        <position position="217"/>
    </location>
    <ligand>
        <name>L-aspartate</name>
        <dbReference type="ChEBI" id="CHEBI:29991"/>
    </ligand>
</feature>
<feature type="binding site" evidence="1">
    <location>
        <position position="226"/>
    </location>
    <ligand>
        <name>ATP</name>
        <dbReference type="ChEBI" id="CHEBI:30616"/>
    </ligand>
</feature>
<feature type="binding site" evidence="1">
    <location>
        <position position="448"/>
    </location>
    <ligand>
        <name>L-aspartate</name>
        <dbReference type="ChEBI" id="CHEBI:29991"/>
    </ligand>
</feature>
<feature type="binding site" evidence="1">
    <location>
        <position position="482"/>
    </location>
    <ligand>
        <name>ATP</name>
        <dbReference type="ChEBI" id="CHEBI:30616"/>
    </ligand>
</feature>
<feature type="binding site" evidence="1">
    <location>
        <position position="489"/>
    </location>
    <ligand>
        <name>L-aspartate</name>
        <dbReference type="ChEBI" id="CHEBI:29991"/>
    </ligand>
</feature>
<feature type="binding site" evidence="1">
    <location>
        <begin position="534"/>
        <end position="537"/>
    </location>
    <ligand>
        <name>ATP</name>
        <dbReference type="ChEBI" id="CHEBI:30616"/>
    </ligand>
</feature>
<reference key="1">
    <citation type="journal article" date="2008" name="J. Bacteriol.">
        <title>The pangenome structure of Escherichia coli: comparative genomic analysis of E. coli commensal and pathogenic isolates.</title>
        <authorList>
            <person name="Rasko D.A."/>
            <person name="Rosovitz M.J."/>
            <person name="Myers G.S.A."/>
            <person name="Mongodin E.F."/>
            <person name="Fricke W.F."/>
            <person name="Gajer P."/>
            <person name="Crabtree J."/>
            <person name="Sebaihia M."/>
            <person name="Thomson N.R."/>
            <person name="Chaudhuri R."/>
            <person name="Henderson I.R."/>
            <person name="Sperandio V."/>
            <person name="Ravel J."/>
        </authorList>
    </citation>
    <scope>NUCLEOTIDE SEQUENCE [LARGE SCALE GENOMIC DNA]</scope>
    <source>
        <strain>HS</strain>
    </source>
</reference>
<evidence type="ECO:0000255" key="1">
    <source>
        <dbReference type="HAMAP-Rule" id="MF_00044"/>
    </source>
</evidence>
<proteinExistence type="inferred from homology"/>
<protein>
    <recommendedName>
        <fullName evidence="1">Aspartate--tRNA ligase</fullName>
        <ecNumber evidence="1">6.1.1.12</ecNumber>
    </recommendedName>
    <alternativeName>
        <fullName evidence="1">Aspartyl-tRNA synthetase</fullName>
        <shortName evidence="1">AspRS</shortName>
    </alternativeName>
</protein>
<sequence length="590" mass="65913">MRTEYCGQLRLSHVGQQVTLCGWVNRRRDLGSLIFIDMRDREGIVQVFFDPDRADALKLASELRNEFCIQVTGTVRARDEKNINRDMATGEIEVLASSLTIINRADVLPLDSNHVNTEEARLKYRYLDLRRPEMAQRLKTRAKITSLVRRFMDDHGFLDIETPMLTKATPEGARDYLVPSRVHKGKFYALPQSPQLFKQLLMMSGFDRYYQIVKCFRDEDLRADRQPEFTQIDVETSFMTAPQVREVMEALVRHLWLEVKGVDLGDFPVMTFAEAERRYGSDKPDLRNPMELTDVADLLKSVEFAVFAGPANDPKGRVAALRVPGGASLTRKQIDEYGNFVKIYGAKGLAYIKVNERAKGLEGINSPVAKFLNAEIIEDILDRTAAQDGDMIFFGADNKKIVADAMGALRLKVGKDLGLTDESKWAPLWVIDFPMFEDDGEGGLTAMHHPFTSPKDMTAAELKAAPENAVANAYDMVINGYEVGGGSVRIHNGDMQQTVFGILGINEEEQREKFGFLLDALKYGTPPHAGLAFGLDRLTMLLTGTDNIRDVIAFPKTTAAACLMTEAPSFANPTALAELSIQVVKKAENN</sequence>